<reference key="1">
    <citation type="journal article" date="2008" name="J. Bacteriol.">
        <title>The pangenome structure of Escherichia coli: comparative genomic analysis of E. coli commensal and pathogenic isolates.</title>
        <authorList>
            <person name="Rasko D.A."/>
            <person name="Rosovitz M.J."/>
            <person name="Myers G.S.A."/>
            <person name="Mongodin E.F."/>
            <person name="Fricke W.F."/>
            <person name="Gajer P."/>
            <person name="Crabtree J."/>
            <person name="Sebaihia M."/>
            <person name="Thomson N.R."/>
            <person name="Chaudhuri R."/>
            <person name="Henderson I.R."/>
            <person name="Sperandio V."/>
            <person name="Ravel J."/>
        </authorList>
    </citation>
    <scope>NUCLEOTIDE SEQUENCE [LARGE SCALE GENOMIC DNA]</scope>
    <source>
        <strain>E24377A / ETEC</strain>
    </source>
</reference>
<accession>A7ZQU1</accession>
<protein>
    <recommendedName>
        <fullName evidence="1">Lysophospholipid transporter LplT</fullName>
    </recommendedName>
</protein>
<keyword id="KW-0997">Cell inner membrane</keyword>
<keyword id="KW-1003">Cell membrane</keyword>
<keyword id="KW-0445">Lipid transport</keyword>
<keyword id="KW-0472">Membrane</keyword>
<keyword id="KW-1185">Reference proteome</keyword>
<keyword id="KW-0812">Transmembrane</keyword>
<keyword id="KW-1133">Transmembrane helix</keyword>
<keyword id="KW-0813">Transport</keyword>
<gene>
    <name evidence="1" type="primary">lplT</name>
    <name type="ordered locus">EcE24377A_3155</name>
</gene>
<evidence type="ECO:0000255" key="1">
    <source>
        <dbReference type="HAMAP-Rule" id="MF_01585"/>
    </source>
</evidence>
<evidence type="ECO:0000305" key="2"/>
<feature type="chain" id="PRO_0000382178" description="Lysophospholipid transporter LplT">
    <location>
        <begin position="1"/>
        <end position="397"/>
    </location>
</feature>
<feature type="topological domain" description="Periplasmic" evidence="1">
    <location>
        <begin position="1"/>
        <end position="17"/>
    </location>
</feature>
<feature type="transmembrane region" description="Helical" evidence="1">
    <location>
        <begin position="18"/>
        <end position="38"/>
    </location>
</feature>
<feature type="topological domain" description="Cytoplasmic" evidence="1">
    <location>
        <begin position="39"/>
        <end position="52"/>
    </location>
</feature>
<feature type="transmembrane region" description="Helical" evidence="1">
    <location>
        <begin position="53"/>
        <end position="73"/>
    </location>
</feature>
<feature type="topological domain" description="Periplasmic" evidence="1">
    <location>
        <begin position="74"/>
        <end position="90"/>
    </location>
</feature>
<feature type="transmembrane region" description="Helical" evidence="1">
    <location>
        <begin position="91"/>
        <end position="111"/>
    </location>
</feature>
<feature type="topological domain" description="Cytoplasmic" evidence="1">
    <location>
        <begin position="112"/>
        <end position="144"/>
    </location>
</feature>
<feature type="transmembrane region" description="Helical" evidence="1">
    <location>
        <begin position="145"/>
        <end position="165"/>
    </location>
</feature>
<feature type="topological domain" description="Periplasmic" evidence="1">
    <location>
        <position position="166"/>
    </location>
</feature>
<feature type="transmembrane region" description="Helical" evidence="1">
    <location>
        <begin position="167"/>
        <end position="187"/>
    </location>
</feature>
<feature type="topological domain" description="Cytoplasmic" evidence="1">
    <location>
        <begin position="188"/>
        <end position="226"/>
    </location>
</feature>
<feature type="transmembrane region" description="Helical" evidence="1">
    <location>
        <begin position="227"/>
        <end position="247"/>
    </location>
</feature>
<feature type="topological domain" description="Periplasmic" evidence="1">
    <location>
        <begin position="248"/>
        <end position="256"/>
    </location>
</feature>
<feature type="transmembrane region" description="Helical" evidence="1">
    <location>
        <begin position="257"/>
        <end position="277"/>
    </location>
</feature>
<feature type="topological domain" description="Cytoplasmic" evidence="1">
    <location>
        <begin position="278"/>
        <end position="280"/>
    </location>
</feature>
<feature type="transmembrane region" description="Helical" evidence="1">
    <location>
        <begin position="281"/>
        <end position="301"/>
    </location>
</feature>
<feature type="topological domain" description="Periplasmic" evidence="1">
    <location>
        <begin position="302"/>
        <end position="304"/>
    </location>
</feature>
<feature type="transmembrane region" description="Helical" evidence="1">
    <location>
        <begin position="305"/>
        <end position="325"/>
    </location>
</feature>
<feature type="topological domain" description="Cytoplasmic" evidence="1">
    <location>
        <begin position="326"/>
        <end position="343"/>
    </location>
</feature>
<feature type="transmembrane region" description="Helical" evidence="1">
    <location>
        <begin position="344"/>
        <end position="364"/>
    </location>
</feature>
<feature type="topological domain" description="Periplasmic" evidence="1">
    <location>
        <begin position="365"/>
        <end position="366"/>
    </location>
</feature>
<feature type="transmembrane region" description="Helical" evidence="1">
    <location>
        <begin position="367"/>
        <end position="387"/>
    </location>
</feature>
<feature type="topological domain" description="Cytoplasmic" evidence="1">
    <location>
        <begin position="388"/>
        <end position="397"/>
    </location>
</feature>
<organism>
    <name type="scientific">Escherichia coli O139:H28 (strain E24377A / ETEC)</name>
    <dbReference type="NCBI Taxonomy" id="331111"/>
    <lineage>
        <taxon>Bacteria</taxon>
        <taxon>Pseudomonadati</taxon>
        <taxon>Pseudomonadota</taxon>
        <taxon>Gammaproteobacteria</taxon>
        <taxon>Enterobacterales</taxon>
        <taxon>Enterobacteriaceae</taxon>
        <taxon>Escherichia</taxon>
    </lineage>
</organism>
<name>LPLT_ECO24</name>
<comment type="function">
    <text evidence="1">Catalyzes the facilitated diffusion of 2-acyl-glycero-3-phosphoethanolamine (2-acyl-GPE) into the cell.</text>
</comment>
<comment type="subcellular location">
    <subcellularLocation>
        <location evidence="1">Cell inner membrane</location>
        <topology evidence="1">Multi-pass membrane protein</topology>
    </subcellularLocation>
</comment>
<comment type="similarity">
    <text evidence="1">Belongs to the major facilitator superfamily. LplT (TC 2.A.1.42) family.</text>
</comment>
<comment type="sequence caution" evidence="2">
    <conflict type="erroneous initiation">
        <sequence resource="EMBL-CDS" id="ABV20844"/>
    </conflict>
</comment>
<proteinExistence type="inferred from homology"/>
<dbReference type="EMBL" id="CP000800">
    <property type="protein sequence ID" value="ABV20844.1"/>
    <property type="status" value="ALT_INIT"/>
    <property type="molecule type" value="Genomic_DNA"/>
</dbReference>
<dbReference type="RefSeq" id="WP_000004618.1">
    <property type="nucleotide sequence ID" value="NC_009801.1"/>
</dbReference>
<dbReference type="SMR" id="A7ZQU1"/>
<dbReference type="GeneID" id="93779161"/>
<dbReference type="KEGG" id="ecw:EcE24377A_3155"/>
<dbReference type="HOGENOM" id="CLU_047399_0_0_6"/>
<dbReference type="Proteomes" id="UP000001122">
    <property type="component" value="Chromosome"/>
</dbReference>
<dbReference type="GO" id="GO:0005886">
    <property type="term" value="C:plasma membrane"/>
    <property type="evidence" value="ECO:0007669"/>
    <property type="project" value="UniProtKB-SubCell"/>
</dbReference>
<dbReference type="GO" id="GO:0051978">
    <property type="term" value="F:lysophospholipid:sodium symporter activity"/>
    <property type="evidence" value="ECO:0007669"/>
    <property type="project" value="InterPro"/>
</dbReference>
<dbReference type="CDD" id="cd06173">
    <property type="entry name" value="MFS_MefA_like"/>
    <property type="match status" value="1"/>
</dbReference>
<dbReference type="FunFam" id="1.20.1250.20:FF:000091">
    <property type="entry name" value="Lysophospholipid transporter LplT"/>
    <property type="match status" value="1"/>
</dbReference>
<dbReference type="Gene3D" id="1.20.1250.20">
    <property type="entry name" value="MFS general substrate transporter like domains"/>
    <property type="match status" value="1"/>
</dbReference>
<dbReference type="HAMAP" id="MF_01585">
    <property type="entry name" value="MFS_LplT"/>
    <property type="match status" value="1"/>
</dbReference>
<dbReference type="InterPro" id="IPR023727">
    <property type="entry name" value="LysoPLipid__transptr_LplT"/>
</dbReference>
<dbReference type="InterPro" id="IPR011701">
    <property type="entry name" value="MFS"/>
</dbReference>
<dbReference type="InterPro" id="IPR036259">
    <property type="entry name" value="MFS_trans_sf"/>
</dbReference>
<dbReference type="NCBIfam" id="NF008397">
    <property type="entry name" value="PRK11195.1"/>
    <property type="match status" value="1"/>
</dbReference>
<dbReference type="PANTHER" id="PTHR43266">
    <property type="entry name" value="MACROLIDE-EFFLUX PROTEIN"/>
    <property type="match status" value="1"/>
</dbReference>
<dbReference type="PANTHER" id="PTHR43266:SF2">
    <property type="entry name" value="MAJOR FACILITATOR SUPERFAMILY (MFS) PROFILE DOMAIN-CONTAINING PROTEIN"/>
    <property type="match status" value="1"/>
</dbReference>
<dbReference type="Pfam" id="PF07690">
    <property type="entry name" value="MFS_1"/>
    <property type="match status" value="1"/>
</dbReference>
<dbReference type="SUPFAM" id="SSF103473">
    <property type="entry name" value="MFS general substrate transporter"/>
    <property type="match status" value="1"/>
</dbReference>
<sequence length="397" mass="41642">MSESVHTNTSLWSKGMKAVIVAQFLSAFGDNALLFATLALLKAQFYPEWSQPILQMVFVGAYILFAPFVGQVADSFAKGRVMMFANGLKLLGAASICFGINPFLGYTLVGVGAAAYSPAKYGILGELTTGSKLVKANGLMEASTIAAILLGSVAGGVLADWHVLVALAACALAYGGAVVANIYIPKLAAARPGQSWNLINMTRSFLNACTSLWRNGETRFSLVGTSLFWGAGVTLRFLLVLWVPVALGITDNATPTYLNAMVAIGIVVGAGAAAKLVTLETVSRCMPAGILIGVVVLIFSLQHELLPAYALLMLIGVMGGFFVVPLNALLQERGKKSVGAGNAIAVQNLGENSAMLLMLGIYSLAVMVGIPVVPIGIGFGALFALAITALWIWQRRH</sequence>